<proteinExistence type="evidence at protein level"/>
<name>QNG1_SPHTD</name>
<keyword id="KW-0002">3D-structure</keyword>
<keyword id="KW-0378">Hydrolase</keyword>
<keyword id="KW-1185">Reference proteome</keyword>
<protein>
    <recommendedName>
        <fullName evidence="2">Queuosine 5'-phosphate N-glycosylase/hydrolase</fullName>
        <ecNumber evidence="1">3.2.2.-</ecNumber>
    </recommendedName>
    <alternativeName>
        <fullName evidence="2">Queuine salvage protein Qng1</fullName>
    </alternativeName>
    <alternativeName>
        <fullName evidence="2">Queuosine-nucleotide N-glycosylase/hydrolase</fullName>
    </alternativeName>
</protein>
<dbReference type="EC" id="3.2.2.-" evidence="1"/>
<dbReference type="EMBL" id="CP001823">
    <property type="protein sequence ID" value="ACZ39752.1"/>
    <property type="molecule type" value="Genomic_DNA"/>
</dbReference>
<dbReference type="RefSeq" id="WP_012872793.1">
    <property type="nucleotide sequence ID" value="NC_013523.1"/>
</dbReference>
<dbReference type="PDB" id="7U07">
    <property type="method" value="X-ray"/>
    <property type="resolution" value="2.10 A"/>
    <property type="chains" value="A/B=1-323"/>
</dbReference>
<dbReference type="PDB" id="7U1O">
    <property type="method" value="X-ray"/>
    <property type="resolution" value="2.35 A"/>
    <property type="chains" value="A/B=1-323"/>
</dbReference>
<dbReference type="PDB" id="7U5A">
    <property type="method" value="X-ray"/>
    <property type="resolution" value="2.50 A"/>
    <property type="chains" value="A/B=1-323"/>
</dbReference>
<dbReference type="PDB" id="7U91">
    <property type="method" value="X-ray"/>
    <property type="resolution" value="2.40 A"/>
    <property type="chains" value="A/B=1-323"/>
</dbReference>
<dbReference type="PDB" id="7UK3">
    <property type="method" value="X-ray"/>
    <property type="resolution" value="2.31 A"/>
    <property type="chains" value="A=1-323"/>
</dbReference>
<dbReference type="PDB" id="7ULC">
    <property type="method" value="X-ray"/>
    <property type="resolution" value="1.99 A"/>
    <property type="chains" value="A/B=1-323"/>
</dbReference>
<dbReference type="PDBsum" id="7U07"/>
<dbReference type="PDBsum" id="7U1O"/>
<dbReference type="PDBsum" id="7U5A"/>
<dbReference type="PDBsum" id="7U91"/>
<dbReference type="PDBsum" id="7UK3"/>
<dbReference type="PDBsum" id="7ULC"/>
<dbReference type="SMR" id="D1C7A6"/>
<dbReference type="STRING" id="479434.Sthe_2331"/>
<dbReference type="KEGG" id="sti:Sthe_2331"/>
<dbReference type="eggNOG" id="ENOG502ZJ84">
    <property type="taxonomic scope" value="Bacteria"/>
</dbReference>
<dbReference type="HOGENOM" id="CLU_036001_1_0_0"/>
<dbReference type="InParanoid" id="D1C7A6"/>
<dbReference type="OrthoDB" id="145736at2"/>
<dbReference type="Proteomes" id="UP000002027">
    <property type="component" value="Chromosome 1"/>
</dbReference>
<dbReference type="GO" id="GO:0016787">
    <property type="term" value="F:hydrolase activity"/>
    <property type="evidence" value="ECO:0007669"/>
    <property type="project" value="UniProtKB-KW"/>
</dbReference>
<dbReference type="GO" id="GO:0101030">
    <property type="term" value="P:tRNA-guanine transglycosylation"/>
    <property type="evidence" value="ECO:0007669"/>
    <property type="project" value="TreeGrafter"/>
</dbReference>
<dbReference type="InterPro" id="IPR019438">
    <property type="entry name" value="Q_salvage"/>
</dbReference>
<dbReference type="PANTHER" id="PTHR21314:SF0">
    <property type="entry name" value="QUEUOSINE 5'-PHOSPHATE N-GLYCOSYLASE_HYDROLASE"/>
    <property type="match status" value="1"/>
</dbReference>
<dbReference type="PANTHER" id="PTHR21314">
    <property type="entry name" value="QUEUOSINE 5'-PHOSPHATE N-GLYCOSYLASE_HYDROLASE-RELATED"/>
    <property type="match status" value="1"/>
</dbReference>
<dbReference type="Pfam" id="PF10343">
    <property type="entry name" value="Q_salvage"/>
    <property type="match status" value="1"/>
</dbReference>
<sequence length="323" mass="36077">MADPGDRLGVLTTTRRVVEQAQAVWIDHDAVAQIAEAFAARQVTPPTWNRELHWSDGREALANYILVLDAVNFCFWGEPRWRIEYAGAVYDGYWALAASLKRALEQGVPLTDASYLAEITRDDVATIFAGEGEIPLLDERARILRETGSVLAERFAGRFSDAIAAAGRSAVALVDIVTNAFPSFRDVATYRGEQVRFYKRAQILVSDLYGAFDGSDLGAFDDLGELTAFADYKVPQVLHHLGILRYAPALHDRLARREEIPAGSPEEVEIRAATIWGVEELRRALASRGHALDAYQVDWLLWDEGQRLPAGTLPYHRTRTIFY</sequence>
<feature type="chain" id="PRO_0000458134" description="Queuosine 5'-phosphate N-glycosylase/hydrolase">
    <location>
        <begin position="1"/>
        <end position="323"/>
    </location>
</feature>
<feature type="active site" description="Nucleophile or transition state stabilizer" evidence="4">
    <location>
        <position position="231"/>
    </location>
</feature>
<feature type="binding site" evidence="1 12">
    <location>
        <position position="72"/>
    </location>
    <ligand>
        <name>queuosine 5'-phosphate</name>
        <dbReference type="ChEBI" id="CHEBI:194371"/>
    </ligand>
</feature>
<feature type="binding site" evidence="1 12">
    <location>
        <position position="93"/>
    </location>
    <ligand>
        <name>queuosine 5'-phosphate</name>
        <dbReference type="ChEBI" id="CHEBI:194371"/>
    </ligand>
</feature>
<feature type="binding site" evidence="1 12">
    <location>
        <position position="199"/>
    </location>
    <ligand>
        <name>queuosine 5'-phosphate</name>
        <dbReference type="ChEBI" id="CHEBI:194371"/>
    </ligand>
</feature>
<feature type="binding site" evidence="1 12">
    <location>
        <position position="229"/>
    </location>
    <ligand>
        <name>queuosine 5'-phosphate</name>
        <dbReference type="ChEBI" id="CHEBI:194371"/>
    </ligand>
</feature>
<feature type="binding site" evidence="1 12">
    <location>
        <position position="231"/>
    </location>
    <ligand>
        <name>queuosine 5'-phosphate</name>
        <dbReference type="ChEBI" id="CHEBI:194371"/>
    </ligand>
</feature>
<feature type="binding site" evidence="1 12">
    <location>
        <position position="298"/>
    </location>
    <ligand>
        <name>queuosine 5'-phosphate</name>
        <dbReference type="ChEBI" id="CHEBI:194371"/>
    </ligand>
</feature>
<feature type="binding site" evidence="1 12">
    <location>
        <position position="302"/>
    </location>
    <ligand>
        <name>queuosine 5'-phosphate</name>
        <dbReference type="ChEBI" id="CHEBI:194371"/>
    </ligand>
</feature>
<feature type="binding site" evidence="1 12">
    <location>
        <position position="306"/>
    </location>
    <ligand>
        <name>queuosine 5'-phosphate</name>
        <dbReference type="ChEBI" id="CHEBI:194371"/>
    </ligand>
</feature>
<feature type="helix" evidence="14">
    <location>
        <begin position="10"/>
        <end position="20"/>
    </location>
</feature>
<feature type="strand" evidence="14">
    <location>
        <begin position="22"/>
        <end position="26"/>
    </location>
</feature>
<feature type="helix" evidence="14">
    <location>
        <begin position="28"/>
        <end position="40"/>
    </location>
</feature>
<feature type="strand" evidence="14">
    <location>
        <begin position="50"/>
        <end position="53"/>
    </location>
</feature>
<feature type="helix" evidence="14">
    <location>
        <begin position="58"/>
        <end position="70"/>
    </location>
</feature>
<feature type="strand" evidence="14">
    <location>
        <begin position="82"/>
        <end position="85"/>
    </location>
</feature>
<feature type="strand" evidence="14">
    <location>
        <begin position="88"/>
        <end position="91"/>
    </location>
</feature>
<feature type="helix" evidence="14">
    <location>
        <begin position="92"/>
        <end position="105"/>
    </location>
</feature>
<feature type="helix" evidence="14">
    <location>
        <begin position="113"/>
        <end position="118"/>
    </location>
</feature>
<feature type="helix" evidence="14">
    <location>
        <begin position="121"/>
        <end position="127"/>
    </location>
</feature>
<feature type="strand" evidence="14">
    <location>
        <begin position="130"/>
        <end position="132"/>
    </location>
</feature>
<feature type="helix" evidence="14">
    <location>
        <begin position="137"/>
        <end position="154"/>
    </location>
</feature>
<feature type="helix" evidence="14">
    <location>
        <begin position="159"/>
        <end position="165"/>
    </location>
</feature>
<feature type="turn" evidence="14">
    <location>
        <begin position="166"/>
        <end position="168"/>
    </location>
</feature>
<feature type="helix" evidence="14">
    <location>
        <begin position="170"/>
        <end position="180"/>
    </location>
</feature>
<feature type="helix" evidence="14">
    <location>
        <begin position="182"/>
        <end position="184"/>
    </location>
</feature>
<feature type="strand" evidence="14">
    <location>
        <begin position="187"/>
        <end position="190"/>
    </location>
</feature>
<feature type="strand" evidence="14">
    <location>
        <begin position="193"/>
        <end position="196"/>
    </location>
</feature>
<feature type="helix" evidence="14">
    <location>
        <begin position="199"/>
        <end position="211"/>
    </location>
</feature>
<feature type="turn" evidence="14">
    <location>
        <begin position="212"/>
        <end position="214"/>
    </location>
</feature>
<feature type="helix" evidence="14">
    <location>
        <begin position="216"/>
        <end position="218"/>
    </location>
</feature>
<feature type="helix" evidence="14">
    <location>
        <begin position="223"/>
        <end position="225"/>
    </location>
</feature>
<feature type="helix" evidence="14">
    <location>
        <begin position="233"/>
        <end position="240"/>
    </location>
</feature>
<feature type="strand" evidence="14">
    <location>
        <begin position="243"/>
        <end position="246"/>
    </location>
</feature>
<feature type="helix" evidence="14">
    <location>
        <begin position="248"/>
        <end position="256"/>
    </location>
</feature>
<feature type="helix" evidence="14">
    <location>
        <begin position="265"/>
        <end position="287"/>
    </location>
</feature>
<feature type="helix" evidence="14">
    <location>
        <begin position="294"/>
        <end position="304"/>
    </location>
</feature>
<feature type="helix" evidence="13">
    <location>
        <begin position="305"/>
        <end position="307"/>
    </location>
</feature>
<gene>
    <name evidence="5" type="ordered locus">Sthe_2331</name>
</gene>
<gene>
    <name evidence="2" type="primary">qng1</name>
</gene>
<organism>
    <name type="scientific">Sphaerobacter thermophilus (strain ATCC 49802 / DSM 20745 / KCCM 41009 / NCIMB 13125 / S 6022)</name>
    <dbReference type="NCBI Taxonomy" id="479434"/>
    <lineage>
        <taxon>Bacteria</taxon>
        <taxon>Pseudomonadati</taxon>
        <taxon>Thermomicrobiota</taxon>
        <taxon>Thermomicrobia</taxon>
        <taxon>Sphaerobacterales</taxon>
        <taxon>Sphaerobacterineae</taxon>
        <taxon>Sphaerobacteraceae</taxon>
        <taxon>Sphaerobacter</taxon>
    </lineage>
</organism>
<evidence type="ECO:0000269" key="1">
    <source>
    </source>
</evidence>
<evidence type="ECO:0000303" key="2">
    <source>
    </source>
</evidence>
<evidence type="ECO:0000305" key="3"/>
<evidence type="ECO:0000305" key="4">
    <source>
    </source>
</evidence>
<evidence type="ECO:0000312" key="5">
    <source>
        <dbReference type="EMBL" id="ACZ39752.1"/>
    </source>
</evidence>
<evidence type="ECO:0000312" key="6">
    <source>
        <dbReference type="PDB" id="7U07"/>
    </source>
</evidence>
<evidence type="ECO:0000312" key="7">
    <source>
        <dbReference type="PDB" id="7U1O"/>
    </source>
</evidence>
<evidence type="ECO:0000312" key="8">
    <source>
        <dbReference type="PDB" id="7U5A"/>
    </source>
</evidence>
<evidence type="ECO:0000312" key="9">
    <source>
        <dbReference type="PDB" id="7U91"/>
    </source>
</evidence>
<evidence type="ECO:0000312" key="10">
    <source>
        <dbReference type="PDB" id="7UK3"/>
    </source>
</evidence>
<evidence type="ECO:0000312" key="11">
    <source>
        <dbReference type="PDB" id="7ULC"/>
    </source>
</evidence>
<evidence type="ECO:0007744" key="12">
    <source>
        <dbReference type="PDB" id="7U91"/>
    </source>
</evidence>
<evidence type="ECO:0007829" key="13">
    <source>
        <dbReference type="PDB" id="7U07"/>
    </source>
</evidence>
<evidence type="ECO:0007829" key="14">
    <source>
        <dbReference type="PDB" id="7ULC"/>
    </source>
</evidence>
<reference key="1">
    <citation type="submission" date="2009-11" db="EMBL/GenBank/DDBJ databases">
        <title>The complete chromosome 1 of Sphaerobacter thermophilus DSM 20745.</title>
        <authorList>
            <person name="Lucas S."/>
            <person name="Copeland A."/>
            <person name="Lapidus A."/>
            <person name="Glavina del Rio T."/>
            <person name="Dalin E."/>
            <person name="Tice H."/>
            <person name="Bruce D."/>
            <person name="Goodwin L."/>
            <person name="Pitluck S."/>
            <person name="Kyrpides N."/>
            <person name="Mavromatis K."/>
            <person name="Ivanova N."/>
            <person name="Mikhailova N."/>
            <person name="LaButti K.M."/>
            <person name="Clum A."/>
            <person name="Sun H.I."/>
            <person name="Brettin T."/>
            <person name="Detter J.C."/>
            <person name="Han C."/>
            <person name="Larimer F."/>
            <person name="Land M."/>
            <person name="Hauser L."/>
            <person name="Markowitz V."/>
            <person name="Cheng J.F."/>
            <person name="Hugenholtz P."/>
            <person name="Woyke T."/>
            <person name="Wu D."/>
            <person name="Steenblock K."/>
            <person name="Schneider S."/>
            <person name="Pukall R."/>
            <person name="Goeker M."/>
            <person name="Klenk H.P."/>
            <person name="Eisen J.A."/>
        </authorList>
    </citation>
    <scope>NUCLEOTIDE SEQUENCE [LARGE SCALE GENOMIC DNA]</scope>
    <source>
        <strain>ATCC 49802 / DSM 20745 / KCCM 41009 / NCIMB 13125 / S 6022</strain>
    </source>
</reference>
<reference evidence="6 7 8 9 10 11" key="2">
    <citation type="journal article" date="2023" name="Nucleic Acids Res.">
        <title>Structural basis of Qng1-mediated salvage of the micronutrient queuine from queuosine-5'-monophosphate as the biological substrate.</title>
        <authorList>
            <person name="Hung S.H."/>
            <person name="Elliott G.I."/>
            <person name="Ramkumar T.R."/>
            <person name="Burtnyak L."/>
            <person name="McGrenaghan C.J."/>
            <person name="Alkuzweny S."/>
            <person name="Quaiyum S."/>
            <person name="Iwata-Reuyl D."/>
            <person name="Pan X."/>
            <person name="Green B.D."/>
            <person name="Kelly V.P."/>
            <person name="de Crecy-Lagard V."/>
            <person name="Swairjo M.A."/>
        </authorList>
    </citation>
    <scope>X-RAY CRYSTALLOGRAPHY (1.99 ANGSTROMS) OF WILD-TYPE AND MUTANTS ASN-231 AND CYS-199 IN COMPLEXES WITH QUEUOSINE-5'-PHOSPHATE AND QUEUOSINE</scope>
    <scope>FUNCTION</scope>
    <scope>CATALYTIC ACTIVITY</scope>
    <scope>SUBSTRATE SPECIFICITY</scope>
    <scope>REACTION MECHANISM</scope>
    <scope>ACTIVE SITE</scope>
    <scope>SUBUNIT</scope>
</reference>
<accession>D1C7A6</accession>
<comment type="function">
    <text evidence="1">Catalyzes the hydrolysis of queuosine 5'-phosphate, releasing the nucleobase queuine (q). Is likely required for salvage of queuine from exogenous queuosine (Q) that is imported and then converted to queuosine 5'-phosphate intracellularly. In vitro, can also catalyze the release of the q base directly from Q as substrate; however, Q may not be the biologically relevant substrate. Shows a very low activity on queuosine 3',5'-diphosphate, and cannot release q from queuosine 3'-phosphate and from the 5'-nucleotides AMP, UMP, CMP or GMP, indicating specificity for the queuine base.</text>
</comment>
<comment type="catalytic activity">
    <reaction evidence="1">
        <text>queuosine 5'-phosphate + H2O = queuine + D-ribose 5-phosphate</text>
        <dbReference type="Rhea" id="RHEA:75387"/>
        <dbReference type="ChEBI" id="CHEBI:15377"/>
        <dbReference type="ChEBI" id="CHEBI:17433"/>
        <dbReference type="ChEBI" id="CHEBI:78346"/>
        <dbReference type="ChEBI" id="CHEBI:194371"/>
    </reaction>
    <physiologicalReaction direction="left-to-right" evidence="4">
        <dbReference type="Rhea" id="RHEA:75388"/>
    </physiologicalReaction>
</comment>
<comment type="subunit">
    <text evidence="4">Monomer.</text>
</comment>
<comment type="similarity">
    <text evidence="3">Belongs to the QNG1 protein family.</text>
</comment>